<sequence>MLKDIFFEQVKPAYGCTEPIAIALSTAVGKKYSKGNVKSINITLDKNTYKNGLVVNIPGTNTFGLELAAALGYLCGDGNKGLEVLKDINEDCLKKAMKMKNMVNISLNEEQHLFVNTTIIAENTVQIVIEGKHDNIAKIVVNDKVIKNEEFHPGMTSIEKIKNYSLDKIIKYVEHPDEDVLKYVEKAIDMNLKIAEYGINTKGNFSNAAINEYVKYVSAGVDARMSGVLMPVMTVAGSGNQGLACILPIAIFKGKVEREKLLKATLLSILVTIYIKAYTGLLTPICGAGSISSAGAAAGLTYLKGGNNTQIKNAINDTLGTLFGLTCDGAKRGCALKAITGTFTALQVSSLALNNIDVPCGNGIVAKDVEETIRRVEKLTNSVKNFDKDVLDYIGKC</sequence>
<organism>
    <name type="scientific">Thermosipho melanesiensis (strain DSM 12029 / CIP 104789 / BI429)</name>
    <dbReference type="NCBI Taxonomy" id="391009"/>
    <lineage>
        <taxon>Bacteria</taxon>
        <taxon>Thermotogati</taxon>
        <taxon>Thermotogota</taxon>
        <taxon>Thermotogae</taxon>
        <taxon>Thermotogales</taxon>
        <taxon>Fervidobacteriaceae</taxon>
        <taxon>Thermosipho</taxon>
    </lineage>
</organism>
<reference key="1">
    <citation type="submission" date="2007-05" db="EMBL/GenBank/DDBJ databases">
        <title>Complete sequence of Thermosipho melanesiensis BI429.</title>
        <authorList>
            <consortium name="US DOE Joint Genome Institute"/>
            <person name="Copeland A."/>
            <person name="Lucas S."/>
            <person name="Lapidus A."/>
            <person name="Barry K."/>
            <person name="Glavina del Rio T."/>
            <person name="Dalin E."/>
            <person name="Tice H."/>
            <person name="Pitluck S."/>
            <person name="Chertkov O."/>
            <person name="Brettin T."/>
            <person name="Bruce D."/>
            <person name="Detter J.C."/>
            <person name="Han C."/>
            <person name="Schmutz J."/>
            <person name="Larimer F."/>
            <person name="Land M."/>
            <person name="Hauser L."/>
            <person name="Kyrpides N."/>
            <person name="Mikhailova N."/>
            <person name="Nelson K."/>
            <person name="Gogarten J.P."/>
            <person name="Noll K."/>
            <person name="Richardson P."/>
        </authorList>
    </citation>
    <scope>NUCLEOTIDE SEQUENCE [LARGE SCALE GENOMIC DNA]</scope>
    <source>
        <strain>DSM 12029 / CIP 104789 / BI429</strain>
    </source>
</reference>
<name>Y1007_THEM4</name>
<accession>A6LLR7</accession>
<protein>
    <recommendedName>
        <fullName evidence="1">UPF0597 protein Tmel_1007</fullName>
    </recommendedName>
</protein>
<comment type="similarity">
    <text evidence="1">Belongs to the UPF0597 family.</text>
</comment>
<proteinExistence type="inferred from homology"/>
<gene>
    <name type="ordered locus">Tmel_1007</name>
</gene>
<evidence type="ECO:0000255" key="1">
    <source>
        <dbReference type="HAMAP-Rule" id="MF_01845"/>
    </source>
</evidence>
<dbReference type="EMBL" id="CP000716">
    <property type="protein sequence ID" value="ABR30868.1"/>
    <property type="molecule type" value="Genomic_DNA"/>
</dbReference>
<dbReference type="RefSeq" id="WP_012057228.1">
    <property type="nucleotide sequence ID" value="NC_009616.1"/>
</dbReference>
<dbReference type="STRING" id="391009.Tmel_1007"/>
<dbReference type="KEGG" id="tme:Tmel_1007"/>
<dbReference type="eggNOG" id="COG3681">
    <property type="taxonomic scope" value="Bacteria"/>
</dbReference>
<dbReference type="HOGENOM" id="CLU_051840_0_0_0"/>
<dbReference type="OrthoDB" id="41906at2"/>
<dbReference type="Proteomes" id="UP000001110">
    <property type="component" value="Chromosome"/>
</dbReference>
<dbReference type="GO" id="GO:0080146">
    <property type="term" value="F:L-cysteine desulfhydrase activity"/>
    <property type="evidence" value="ECO:0007669"/>
    <property type="project" value="TreeGrafter"/>
</dbReference>
<dbReference type="GO" id="GO:0019450">
    <property type="term" value="P:L-cysteine catabolic process to pyruvate"/>
    <property type="evidence" value="ECO:0007669"/>
    <property type="project" value="TreeGrafter"/>
</dbReference>
<dbReference type="HAMAP" id="MF_01845">
    <property type="entry name" value="UPF0597"/>
    <property type="match status" value="1"/>
</dbReference>
<dbReference type="InterPro" id="IPR005130">
    <property type="entry name" value="Ser_deHydtase-like_asu"/>
</dbReference>
<dbReference type="InterPro" id="IPR021144">
    <property type="entry name" value="UPF0597"/>
</dbReference>
<dbReference type="PANTHER" id="PTHR30501">
    <property type="entry name" value="UPF0597 PROTEIN YHAM"/>
    <property type="match status" value="1"/>
</dbReference>
<dbReference type="PANTHER" id="PTHR30501:SF2">
    <property type="entry name" value="UPF0597 PROTEIN YHAM"/>
    <property type="match status" value="1"/>
</dbReference>
<dbReference type="Pfam" id="PF03313">
    <property type="entry name" value="SDH_alpha"/>
    <property type="match status" value="1"/>
</dbReference>
<dbReference type="PIRSF" id="PIRSF006054">
    <property type="entry name" value="UCP006054"/>
    <property type="match status" value="1"/>
</dbReference>
<feature type="chain" id="PRO_0000339863" description="UPF0597 protein Tmel_1007">
    <location>
        <begin position="1"/>
        <end position="397"/>
    </location>
</feature>